<name>SYGA_SHEPW</name>
<organism>
    <name type="scientific">Shewanella piezotolerans (strain WP3 / JCM 13877)</name>
    <dbReference type="NCBI Taxonomy" id="225849"/>
    <lineage>
        <taxon>Bacteria</taxon>
        <taxon>Pseudomonadati</taxon>
        <taxon>Pseudomonadota</taxon>
        <taxon>Gammaproteobacteria</taxon>
        <taxon>Alteromonadales</taxon>
        <taxon>Shewanellaceae</taxon>
        <taxon>Shewanella</taxon>
    </lineage>
</organism>
<keyword id="KW-0030">Aminoacyl-tRNA synthetase</keyword>
<keyword id="KW-0067">ATP-binding</keyword>
<keyword id="KW-0963">Cytoplasm</keyword>
<keyword id="KW-0436">Ligase</keyword>
<keyword id="KW-0547">Nucleotide-binding</keyword>
<keyword id="KW-0648">Protein biosynthesis</keyword>
<evidence type="ECO:0000255" key="1">
    <source>
        <dbReference type="HAMAP-Rule" id="MF_00254"/>
    </source>
</evidence>
<proteinExistence type="inferred from homology"/>
<accession>B8CH77</accession>
<comment type="catalytic activity">
    <reaction evidence="1">
        <text>tRNA(Gly) + glycine + ATP = glycyl-tRNA(Gly) + AMP + diphosphate</text>
        <dbReference type="Rhea" id="RHEA:16013"/>
        <dbReference type="Rhea" id="RHEA-COMP:9664"/>
        <dbReference type="Rhea" id="RHEA-COMP:9683"/>
        <dbReference type="ChEBI" id="CHEBI:30616"/>
        <dbReference type="ChEBI" id="CHEBI:33019"/>
        <dbReference type="ChEBI" id="CHEBI:57305"/>
        <dbReference type="ChEBI" id="CHEBI:78442"/>
        <dbReference type="ChEBI" id="CHEBI:78522"/>
        <dbReference type="ChEBI" id="CHEBI:456215"/>
        <dbReference type="EC" id="6.1.1.14"/>
    </reaction>
</comment>
<comment type="subunit">
    <text evidence="1">Tetramer of two alpha and two beta subunits.</text>
</comment>
<comment type="subcellular location">
    <subcellularLocation>
        <location evidence="1">Cytoplasm</location>
    </subcellularLocation>
</comment>
<comment type="similarity">
    <text evidence="1">Belongs to the class-II aminoacyl-tRNA synthetase family.</text>
</comment>
<gene>
    <name evidence="1" type="primary">glyQ</name>
    <name type="ordered locus">swp_0021</name>
</gene>
<protein>
    <recommendedName>
        <fullName evidence="1">Glycine--tRNA ligase alpha subunit</fullName>
        <ecNumber evidence="1">6.1.1.14</ecNumber>
    </recommendedName>
    <alternativeName>
        <fullName evidence="1">Glycyl-tRNA synthetase alpha subunit</fullName>
        <shortName evidence="1">GlyRS</shortName>
    </alternativeName>
</protein>
<sequence length="301" mass="34328">MTTKHDVKTFQGFIMTLQEYWAQQGCAIVQPLDMEVGAGTFHPMTFLRALGPEPMSCAYVQPSRRPTDGRYGDNPNRLQHFYQYQVVLKPSPDNIQELYLGSLEAAGIDMNIHDVRFVEDNWESPTLGAWGLGWEVWLNGMEVSQFTYFQQVGGLECKPVTGEITYGLERLAMYIQEVDNVYDLVWTDGPMGKVMYGDIFHQNEVEQSAYNFEHANVEVLFRAFDDCEVACQHLLSLEKPLALPAYEQVMKASHAFNLLDARHAISVTERQRYILRVRTMAKGVAEAYYQSREALGFPIGK</sequence>
<feature type="chain" id="PRO_1000197215" description="Glycine--tRNA ligase alpha subunit">
    <location>
        <begin position="1"/>
        <end position="301"/>
    </location>
</feature>
<reference key="1">
    <citation type="journal article" date="2008" name="PLoS ONE">
        <title>Environmental adaptation: genomic analysis of the piezotolerant and psychrotolerant deep-sea iron reducing bacterium Shewanella piezotolerans WP3.</title>
        <authorList>
            <person name="Wang F."/>
            <person name="Wang J."/>
            <person name="Jian H."/>
            <person name="Zhang B."/>
            <person name="Li S."/>
            <person name="Wang F."/>
            <person name="Zeng X."/>
            <person name="Gao L."/>
            <person name="Bartlett D.H."/>
            <person name="Yu J."/>
            <person name="Hu S."/>
            <person name="Xiao X."/>
        </authorList>
    </citation>
    <scope>NUCLEOTIDE SEQUENCE [LARGE SCALE GENOMIC DNA]</scope>
    <source>
        <strain>WP3 / JCM 13877</strain>
    </source>
</reference>
<dbReference type="EC" id="6.1.1.14" evidence="1"/>
<dbReference type="EMBL" id="CP000472">
    <property type="protein sequence ID" value="ACJ26869.1"/>
    <property type="molecule type" value="Genomic_DNA"/>
</dbReference>
<dbReference type="RefSeq" id="WP_020910253.1">
    <property type="nucleotide sequence ID" value="NC_011566.1"/>
</dbReference>
<dbReference type="SMR" id="B8CH77"/>
<dbReference type="STRING" id="225849.swp_0021"/>
<dbReference type="KEGG" id="swp:swp_0021"/>
<dbReference type="eggNOG" id="COG0752">
    <property type="taxonomic scope" value="Bacteria"/>
</dbReference>
<dbReference type="HOGENOM" id="CLU_057066_1_0_6"/>
<dbReference type="OrthoDB" id="9802183at2"/>
<dbReference type="Proteomes" id="UP000000753">
    <property type="component" value="Chromosome"/>
</dbReference>
<dbReference type="GO" id="GO:0005829">
    <property type="term" value="C:cytosol"/>
    <property type="evidence" value="ECO:0007669"/>
    <property type="project" value="TreeGrafter"/>
</dbReference>
<dbReference type="GO" id="GO:0005524">
    <property type="term" value="F:ATP binding"/>
    <property type="evidence" value="ECO:0007669"/>
    <property type="project" value="UniProtKB-UniRule"/>
</dbReference>
<dbReference type="GO" id="GO:0004820">
    <property type="term" value="F:glycine-tRNA ligase activity"/>
    <property type="evidence" value="ECO:0007669"/>
    <property type="project" value="UniProtKB-UniRule"/>
</dbReference>
<dbReference type="GO" id="GO:0006426">
    <property type="term" value="P:glycyl-tRNA aminoacylation"/>
    <property type="evidence" value="ECO:0007669"/>
    <property type="project" value="UniProtKB-UniRule"/>
</dbReference>
<dbReference type="CDD" id="cd00733">
    <property type="entry name" value="GlyRS_alpha_core"/>
    <property type="match status" value="1"/>
</dbReference>
<dbReference type="FunFam" id="3.30.930.10:FF:000006">
    <property type="entry name" value="Glycine--tRNA ligase alpha subunit"/>
    <property type="match status" value="1"/>
</dbReference>
<dbReference type="Gene3D" id="3.30.930.10">
    <property type="entry name" value="Bira Bifunctional Protein, Domain 2"/>
    <property type="match status" value="1"/>
</dbReference>
<dbReference type="Gene3D" id="1.20.58.180">
    <property type="entry name" value="Class II aaRS and biotin synthetases, domain 2"/>
    <property type="match status" value="1"/>
</dbReference>
<dbReference type="HAMAP" id="MF_00254">
    <property type="entry name" value="Gly_tRNA_synth_alpha"/>
    <property type="match status" value="1"/>
</dbReference>
<dbReference type="InterPro" id="IPR045864">
    <property type="entry name" value="aa-tRNA-synth_II/BPL/LPL"/>
</dbReference>
<dbReference type="InterPro" id="IPR006194">
    <property type="entry name" value="Gly-tRNA-synth_heterodimer"/>
</dbReference>
<dbReference type="InterPro" id="IPR002310">
    <property type="entry name" value="Gly-tRNA_ligase_asu"/>
</dbReference>
<dbReference type="NCBIfam" id="TIGR00388">
    <property type="entry name" value="glyQ"/>
    <property type="match status" value="1"/>
</dbReference>
<dbReference type="NCBIfam" id="NF006827">
    <property type="entry name" value="PRK09348.1"/>
    <property type="match status" value="1"/>
</dbReference>
<dbReference type="PANTHER" id="PTHR30075:SF2">
    <property type="entry name" value="GLYCINE--TRNA LIGASE, CHLOROPLASTIC_MITOCHONDRIAL 2"/>
    <property type="match status" value="1"/>
</dbReference>
<dbReference type="PANTHER" id="PTHR30075">
    <property type="entry name" value="GLYCYL-TRNA SYNTHETASE"/>
    <property type="match status" value="1"/>
</dbReference>
<dbReference type="Pfam" id="PF02091">
    <property type="entry name" value="tRNA-synt_2e"/>
    <property type="match status" value="1"/>
</dbReference>
<dbReference type="PRINTS" id="PR01044">
    <property type="entry name" value="TRNASYNTHGA"/>
</dbReference>
<dbReference type="SUPFAM" id="SSF55681">
    <property type="entry name" value="Class II aaRS and biotin synthetases"/>
    <property type="match status" value="1"/>
</dbReference>
<dbReference type="PROSITE" id="PS50861">
    <property type="entry name" value="AA_TRNA_LIGASE_II_GLYAB"/>
    <property type="match status" value="1"/>
</dbReference>